<gene>
    <name evidence="1" type="primary">pyrB</name>
    <name type="ordered locus">XOO1427</name>
</gene>
<keyword id="KW-0665">Pyrimidine biosynthesis</keyword>
<keyword id="KW-1185">Reference proteome</keyword>
<keyword id="KW-0808">Transferase</keyword>
<feature type="chain" id="PRO_0000113234" description="Aspartate carbamoyltransferase catalytic subunit">
    <location>
        <begin position="1"/>
        <end position="315"/>
    </location>
</feature>
<feature type="binding site" evidence="1">
    <location>
        <position position="65"/>
    </location>
    <ligand>
        <name>carbamoyl phosphate</name>
        <dbReference type="ChEBI" id="CHEBI:58228"/>
    </ligand>
</feature>
<feature type="binding site" evidence="1">
    <location>
        <position position="66"/>
    </location>
    <ligand>
        <name>carbamoyl phosphate</name>
        <dbReference type="ChEBI" id="CHEBI:58228"/>
    </ligand>
</feature>
<feature type="binding site" evidence="1">
    <location>
        <position position="93"/>
    </location>
    <ligand>
        <name>L-aspartate</name>
        <dbReference type="ChEBI" id="CHEBI:29991"/>
    </ligand>
</feature>
<feature type="binding site" evidence="1">
    <location>
        <position position="115"/>
    </location>
    <ligand>
        <name>carbamoyl phosphate</name>
        <dbReference type="ChEBI" id="CHEBI:58228"/>
    </ligand>
</feature>
<feature type="binding site" evidence="1">
    <location>
        <position position="145"/>
    </location>
    <ligand>
        <name>carbamoyl phosphate</name>
        <dbReference type="ChEBI" id="CHEBI:58228"/>
    </ligand>
</feature>
<feature type="binding site" evidence="1">
    <location>
        <position position="148"/>
    </location>
    <ligand>
        <name>carbamoyl phosphate</name>
        <dbReference type="ChEBI" id="CHEBI:58228"/>
    </ligand>
</feature>
<feature type="binding site" evidence="1">
    <location>
        <position position="179"/>
    </location>
    <ligand>
        <name>L-aspartate</name>
        <dbReference type="ChEBI" id="CHEBI:29991"/>
    </ligand>
</feature>
<feature type="binding site" evidence="1">
    <location>
        <position position="234"/>
    </location>
    <ligand>
        <name>L-aspartate</name>
        <dbReference type="ChEBI" id="CHEBI:29991"/>
    </ligand>
</feature>
<feature type="binding site" evidence="1">
    <location>
        <position position="275"/>
    </location>
    <ligand>
        <name>carbamoyl phosphate</name>
        <dbReference type="ChEBI" id="CHEBI:58228"/>
    </ligand>
</feature>
<feature type="binding site" evidence="1">
    <location>
        <position position="276"/>
    </location>
    <ligand>
        <name>carbamoyl phosphate</name>
        <dbReference type="ChEBI" id="CHEBI:58228"/>
    </ligand>
</feature>
<dbReference type="EC" id="2.1.3.2" evidence="1"/>
<dbReference type="EMBL" id="AE013598">
    <property type="protein sequence ID" value="AAW74681.1"/>
    <property type="molecule type" value="Genomic_DNA"/>
</dbReference>
<dbReference type="SMR" id="Q5H2Z0"/>
<dbReference type="STRING" id="291331.XOO1427"/>
<dbReference type="KEGG" id="xoo:XOO1427"/>
<dbReference type="HOGENOM" id="CLU_043846_2_0_6"/>
<dbReference type="UniPathway" id="UPA00070">
    <property type="reaction ID" value="UER00116"/>
</dbReference>
<dbReference type="Proteomes" id="UP000006735">
    <property type="component" value="Chromosome"/>
</dbReference>
<dbReference type="GO" id="GO:0005829">
    <property type="term" value="C:cytosol"/>
    <property type="evidence" value="ECO:0007669"/>
    <property type="project" value="TreeGrafter"/>
</dbReference>
<dbReference type="GO" id="GO:0016597">
    <property type="term" value="F:amino acid binding"/>
    <property type="evidence" value="ECO:0007669"/>
    <property type="project" value="InterPro"/>
</dbReference>
<dbReference type="GO" id="GO:0004070">
    <property type="term" value="F:aspartate carbamoyltransferase activity"/>
    <property type="evidence" value="ECO:0007669"/>
    <property type="project" value="UniProtKB-UniRule"/>
</dbReference>
<dbReference type="GO" id="GO:0006207">
    <property type="term" value="P:'de novo' pyrimidine nucleobase biosynthetic process"/>
    <property type="evidence" value="ECO:0007669"/>
    <property type="project" value="InterPro"/>
</dbReference>
<dbReference type="GO" id="GO:0044205">
    <property type="term" value="P:'de novo' UMP biosynthetic process"/>
    <property type="evidence" value="ECO:0007669"/>
    <property type="project" value="UniProtKB-UniRule"/>
</dbReference>
<dbReference type="GO" id="GO:0006520">
    <property type="term" value="P:amino acid metabolic process"/>
    <property type="evidence" value="ECO:0007669"/>
    <property type="project" value="InterPro"/>
</dbReference>
<dbReference type="FunFam" id="3.40.50.1370:FF:000007">
    <property type="entry name" value="Aspartate carbamoyltransferase"/>
    <property type="match status" value="1"/>
</dbReference>
<dbReference type="FunFam" id="3.40.50.1370:FF:000019">
    <property type="entry name" value="Aspartate carbamoyltransferase"/>
    <property type="match status" value="1"/>
</dbReference>
<dbReference type="Gene3D" id="3.40.50.1370">
    <property type="entry name" value="Aspartate/ornithine carbamoyltransferase"/>
    <property type="match status" value="2"/>
</dbReference>
<dbReference type="HAMAP" id="MF_00001">
    <property type="entry name" value="Asp_carb_tr"/>
    <property type="match status" value="1"/>
</dbReference>
<dbReference type="InterPro" id="IPR006132">
    <property type="entry name" value="Asp/Orn_carbamoyltranf_P-bd"/>
</dbReference>
<dbReference type="InterPro" id="IPR006130">
    <property type="entry name" value="Asp/Orn_carbamoylTrfase"/>
</dbReference>
<dbReference type="InterPro" id="IPR036901">
    <property type="entry name" value="Asp/Orn_carbamoylTrfase_sf"/>
</dbReference>
<dbReference type="InterPro" id="IPR002082">
    <property type="entry name" value="Asp_carbamoyltransf"/>
</dbReference>
<dbReference type="InterPro" id="IPR006131">
    <property type="entry name" value="Asp_carbamoyltransf_Asp/Orn-bd"/>
</dbReference>
<dbReference type="NCBIfam" id="TIGR00670">
    <property type="entry name" value="asp_carb_tr"/>
    <property type="match status" value="1"/>
</dbReference>
<dbReference type="NCBIfam" id="NF002032">
    <property type="entry name" value="PRK00856.1"/>
    <property type="match status" value="1"/>
</dbReference>
<dbReference type="PANTHER" id="PTHR45753:SF6">
    <property type="entry name" value="ASPARTATE CARBAMOYLTRANSFERASE"/>
    <property type="match status" value="1"/>
</dbReference>
<dbReference type="PANTHER" id="PTHR45753">
    <property type="entry name" value="ORNITHINE CARBAMOYLTRANSFERASE, MITOCHONDRIAL"/>
    <property type="match status" value="1"/>
</dbReference>
<dbReference type="Pfam" id="PF00185">
    <property type="entry name" value="OTCace"/>
    <property type="match status" value="1"/>
</dbReference>
<dbReference type="Pfam" id="PF02729">
    <property type="entry name" value="OTCace_N"/>
    <property type="match status" value="1"/>
</dbReference>
<dbReference type="PRINTS" id="PR00100">
    <property type="entry name" value="AOTCASE"/>
</dbReference>
<dbReference type="PRINTS" id="PR00101">
    <property type="entry name" value="ATCASE"/>
</dbReference>
<dbReference type="SUPFAM" id="SSF53671">
    <property type="entry name" value="Aspartate/ornithine carbamoyltransferase"/>
    <property type="match status" value="1"/>
</dbReference>
<dbReference type="PROSITE" id="PS00097">
    <property type="entry name" value="CARBAMOYLTRANSFERASE"/>
    <property type="match status" value="1"/>
</dbReference>
<name>PYRB_XANOR</name>
<protein>
    <recommendedName>
        <fullName evidence="1">Aspartate carbamoyltransferase catalytic subunit</fullName>
        <ecNumber evidence="1">2.1.3.2</ecNumber>
    </recommendedName>
    <alternativeName>
        <fullName evidence="1">Aspartate transcarbamylase</fullName>
        <shortName evidence="1">ATCase</shortName>
    </alternativeName>
</protein>
<organism>
    <name type="scientific">Xanthomonas oryzae pv. oryzae (strain KACC10331 / KXO85)</name>
    <dbReference type="NCBI Taxonomy" id="291331"/>
    <lineage>
        <taxon>Bacteria</taxon>
        <taxon>Pseudomonadati</taxon>
        <taxon>Pseudomonadota</taxon>
        <taxon>Gammaproteobacteria</taxon>
        <taxon>Lysobacterales</taxon>
        <taxon>Lysobacteraceae</taxon>
        <taxon>Xanthomonas</taxon>
    </lineage>
</organism>
<comment type="function">
    <text evidence="1">Catalyzes the condensation of carbamoyl phosphate and aspartate to form carbamoyl aspartate and inorganic phosphate, the committed step in the de novo pyrimidine nucleotide biosynthesis pathway.</text>
</comment>
<comment type="catalytic activity">
    <reaction evidence="1">
        <text>carbamoyl phosphate + L-aspartate = N-carbamoyl-L-aspartate + phosphate + H(+)</text>
        <dbReference type="Rhea" id="RHEA:20013"/>
        <dbReference type="ChEBI" id="CHEBI:15378"/>
        <dbReference type="ChEBI" id="CHEBI:29991"/>
        <dbReference type="ChEBI" id="CHEBI:32814"/>
        <dbReference type="ChEBI" id="CHEBI:43474"/>
        <dbReference type="ChEBI" id="CHEBI:58228"/>
        <dbReference type="EC" id="2.1.3.2"/>
    </reaction>
</comment>
<comment type="pathway">
    <text evidence="1">Pyrimidine metabolism; UMP biosynthesis via de novo pathway; (S)-dihydroorotate from bicarbonate: step 2/3.</text>
</comment>
<comment type="subunit">
    <text evidence="1">Heterododecamer (2C3:3R2) of six catalytic PyrB chains organized as two trimers (C3), and six regulatory PyrI chains organized as three dimers (R2).</text>
</comment>
<comment type="similarity">
    <text evidence="1">Belongs to the aspartate/ornithine carbamoyltransferase superfamily. ATCase family.</text>
</comment>
<evidence type="ECO:0000255" key="1">
    <source>
        <dbReference type="HAMAP-Rule" id="MF_00001"/>
    </source>
</evidence>
<proteinExistence type="inferred from homology"/>
<sequence length="315" mass="33602">MTTMQLDSDGRLRHLLTLEGVPRTTLLQLLDRAGQIRDAAVGRVGKRSVLAGTAVCTLFFEPSTRTRSSFHLAAQRLGADVLNFDASTSSTRKGETARDTLKNLEAMGVRGFVVRHPDDGAVKALAAAAGEGTALINAGDGRSAHPTQGLLDMLTLRQAKGTDFSKLKVVIVGDVKHSRVARSDLHALRTLGAGEIRVCGPASLLPDDGILEGCVVGQDFDAMLEGADALMMLRLQRERMEEGLVPSLEQYHTEYGLTRERLARAGHDAAVLHPGPINRGVEITDEVADGAQSCVLRQVANGVAVRMAVLETLLG</sequence>
<reference key="1">
    <citation type="journal article" date="2005" name="Nucleic Acids Res.">
        <title>The genome sequence of Xanthomonas oryzae pathovar oryzae KACC10331, the bacterial blight pathogen of rice.</title>
        <authorList>
            <person name="Lee B.-M."/>
            <person name="Park Y.-J."/>
            <person name="Park D.-S."/>
            <person name="Kang H.-W."/>
            <person name="Kim J.-G."/>
            <person name="Song E.-S."/>
            <person name="Park I.-C."/>
            <person name="Yoon U.-H."/>
            <person name="Hahn J.-H."/>
            <person name="Koo B.-S."/>
            <person name="Lee G.-B."/>
            <person name="Kim H."/>
            <person name="Park H.-S."/>
            <person name="Yoon K.-O."/>
            <person name="Kim J.-H."/>
            <person name="Jung C.-H."/>
            <person name="Koh N.-H."/>
            <person name="Seo J.-S."/>
            <person name="Go S.-J."/>
        </authorList>
    </citation>
    <scope>NUCLEOTIDE SEQUENCE [LARGE SCALE GENOMIC DNA]</scope>
    <source>
        <strain>KACC10331 / KXO85</strain>
    </source>
</reference>
<accession>Q5H2Z0</accession>